<protein>
    <recommendedName>
        <fullName>Translation initiation factor IF-2</fullName>
    </recommendedName>
</protein>
<comment type="function">
    <text evidence="1">One of the essential components for the initiation of protein synthesis. Protects formylmethionyl-tRNA from spontaneous hydrolysis and promotes its binding to the 30S ribosomal subunits. Also involved in the hydrolysis of GTP during the formation of the 70S ribosomal complex (By similarity).</text>
</comment>
<comment type="subcellular location">
    <subcellularLocation>
        <location evidence="1">Cytoplasm</location>
    </subcellularLocation>
</comment>
<comment type="similarity">
    <text evidence="2">Belongs to the TRAFAC class translation factor GTPase superfamily. Classic translation factor GTPase family. IF-2 subfamily.</text>
</comment>
<dbReference type="EMBL" id="L43967">
    <property type="protein sequence ID" value="AAC71360.1"/>
    <property type="molecule type" value="Genomic_DNA"/>
</dbReference>
<dbReference type="EMBL" id="U01765">
    <property type="protein sequence ID" value="AAD10581.1"/>
    <property type="molecule type" value="Genomic_DNA"/>
</dbReference>
<dbReference type="PIR" id="G64215">
    <property type="entry name" value="G64215"/>
</dbReference>
<dbReference type="RefSeq" id="WP_010869352.1">
    <property type="nucleotide sequence ID" value="NC_000908.2"/>
</dbReference>
<dbReference type="SMR" id="P47388"/>
<dbReference type="FunCoup" id="P47388">
    <property type="interactions" value="196"/>
</dbReference>
<dbReference type="STRING" id="243273.MG_142"/>
<dbReference type="GeneID" id="88282274"/>
<dbReference type="KEGG" id="mge:MG_142"/>
<dbReference type="eggNOG" id="COG0532">
    <property type="taxonomic scope" value="Bacteria"/>
</dbReference>
<dbReference type="HOGENOM" id="CLU_006301_5_1_14"/>
<dbReference type="InParanoid" id="P47388"/>
<dbReference type="OrthoDB" id="9811804at2"/>
<dbReference type="BioCyc" id="MGEN243273:G1GJ2-165-MONOMER"/>
<dbReference type="Proteomes" id="UP000000807">
    <property type="component" value="Chromosome"/>
</dbReference>
<dbReference type="GO" id="GO:0005737">
    <property type="term" value="C:cytoplasm"/>
    <property type="evidence" value="ECO:0000318"/>
    <property type="project" value="GO_Central"/>
</dbReference>
<dbReference type="GO" id="GO:0005829">
    <property type="term" value="C:cytosol"/>
    <property type="evidence" value="ECO:0000318"/>
    <property type="project" value="GO_Central"/>
</dbReference>
<dbReference type="GO" id="GO:0005525">
    <property type="term" value="F:GTP binding"/>
    <property type="evidence" value="ECO:0007669"/>
    <property type="project" value="UniProtKB-KW"/>
</dbReference>
<dbReference type="GO" id="GO:0003924">
    <property type="term" value="F:GTPase activity"/>
    <property type="evidence" value="ECO:0007669"/>
    <property type="project" value="UniProtKB-UniRule"/>
</dbReference>
<dbReference type="GO" id="GO:0003743">
    <property type="term" value="F:translation initiation factor activity"/>
    <property type="evidence" value="ECO:0000318"/>
    <property type="project" value="GO_Central"/>
</dbReference>
<dbReference type="GO" id="GO:0006413">
    <property type="term" value="P:translational initiation"/>
    <property type="evidence" value="ECO:0000318"/>
    <property type="project" value="GO_Central"/>
</dbReference>
<dbReference type="CDD" id="cd01887">
    <property type="entry name" value="IF2_eIF5B"/>
    <property type="match status" value="1"/>
</dbReference>
<dbReference type="CDD" id="cd03702">
    <property type="entry name" value="IF2_mtIF2_II"/>
    <property type="match status" value="1"/>
</dbReference>
<dbReference type="CDD" id="cd03692">
    <property type="entry name" value="mtIF2_IVc"/>
    <property type="match status" value="1"/>
</dbReference>
<dbReference type="FunFam" id="2.40.30.10:FF:000008">
    <property type="entry name" value="Translation initiation factor IF-2"/>
    <property type="match status" value="1"/>
</dbReference>
<dbReference type="FunFam" id="2.40.30.10:FF:000054">
    <property type="entry name" value="Translation initiation factor IF-2"/>
    <property type="match status" value="1"/>
</dbReference>
<dbReference type="FunFam" id="3.40.50.10050:FF:000001">
    <property type="entry name" value="Translation initiation factor IF-2"/>
    <property type="match status" value="1"/>
</dbReference>
<dbReference type="FunFam" id="3.40.50.300:FF:000019">
    <property type="entry name" value="Translation initiation factor IF-2"/>
    <property type="match status" value="1"/>
</dbReference>
<dbReference type="Gene3D" id="3.40.50.300">
    <property type="entry name" value="P-loop containing nucleotide triphosphate hydrolases"/>
    <property type="match status" value="1"/>
</dbReference>
<dbReference type="Gene3D" id="2.40.30.10">
    <property type="entry name" value="Translation factors"/>
    <property type="match status" value="2"/>
</dbReference>
<dbReference type="Gene3D" id="3.40.50.10050">
    <property type="entry name" value="Translation initiation factor IF- 2, domain 3"/>
    <property type="match status" value="1"/>
</dbReference>
<dbReference type="HAMAP" id="MF_00100_B">
    <property type="entry name" value="IF_2_B"/>
    <property type="match status" value="1"/>
</dbReference>
<dbReference type="InterPro" id="IPR053905">
    <property type="entry name" value="EF-G-like_DII"/>
</dbReference>
<dbReference type="InterPro" id="IPR044145">
    <property type="entry name" value="IF2_II"/>
</dbReference>
<dbReference type="InterPro" id="IPR027417">
    <property type="entry name" value="P-loop_NTPase"/>
</dbReference>
<dbReference type="InterPro" id="IPR005225">
    <property type="entry name" value="Small_GTP-bd"/>
</dbReference>
<dbReference type="InterPro" id="IPR000795">
    <property type="entry name" value="T_Tr_GTP-bd_dom"/>
</dbReference>
<dbReference type="InterPro" id="IPR000178">
    <property type="entry name" value="TF_IF2_bacterial-like"/>
</dbReference>
<dbReference type="InterPro" id="IPR015760">
    <property type="entry name" value="TIF_IF2"/>
</dbReference>
<dbReference type="InterPro" id="IPR023115">
    <property type="entry name" value="TIF_IF2_dom3"/>
</dbReference>
<dbReference type="InterPro" id="IPR036925">
    <property type="entry name" value="TIF_IF2_dom3_sf"/>
</dbReference>
<dbReference type="InterPro" id="IPR009000">
    <property type="entry name" value="Transl_B-barrel_sf"/>
</dbReference>
<dbReference type="NCBIfam" id="TIGR00487">
    <property type="entry name" value="IF-2"/>
    <property type="match status" value="1"/>
</dbReference>
<dbReference type="NCBIfam" id="TIGR00231">
    <property type="entry name" value="small_GTP"/>
    <property type="match status" value="1"/>
</dbReference>
<dbReference type="PANTHER" id="PTHR43381:SF5">
    <property type="entry name" value="TR-TYPE G DOMAIN-CONTAINING PROTEIN"/>
    <property type="match status" value="1"/>
</dbReference>
<dbReference type="PANTHER" id="PTHR43381">
    <property type="entry name" value="TRANSLATION INITIATION FACTOR IF-2-RELATED"/>
    <property type="match status" value="1"/>
</dbReference>
<dbReference type="Pfam" id="PF22042">
    <property type="entry name" value="EF-G_D2"/>
    <property type="match status" value="1"/>
</dbReference>
<dbReference type="Pfam" id="PF00009">
    <property type="entry name" value="GTP_EFTU"/>
    <property type="match status" value="1"/>
</dbReference>
<dbReference type="Pfam" id="PF11987">
    <property type="entry name" value="IF-2"/>
    <property type="match status" value="1"/>
</dbReference>
<dbReference type="SUPFAM" id="SSF52156">
    <property type="entry name" value="Initiation factor IF2/eIF5b, domain 3"/>
    <property type="match status" value="1"/>
</dbReference>
<dbReference type="SUPFAM" id="SSF52540">
    <property type="entry name" value="P-loop containing nucleoside triphosphate hydrolases"/>
    <property type="match status" value="1"/>
</dbReference>
<dbReference type="SUPFAM" id="SSF50447">
    <property type="entry name" value="Translation proteins"/>
    <property type="match status" value="2"/>
</dbReference>
<dbReference type="PROSITE" id="PS51722">
    <property type="entry name" value="G_TR_2"/>
    <property type="match status" value="1"/>
</dbReference>
<dbReference type="PROSITE" id="PS01176">
    <property type="entry name" value="IF2"/>
    <property type="match status" value="1"/>
</dbReference>
<keyword id="KW-0963">Cytoplasm</keyword>
<keyword id="KW-0342">GTP-binding</keyword>
<keyword id="KW-0396">Initiation factor</keyword>
<keyword id="KW-0547">Nucleotide-binding</keyword>
<keyword id="KW-0648">Protein biosynthesis</keyword>
<keyword id="KW-1185">Reference proteome</keyword>
<name>IF2_MYCGE</name>
<evidence type="ECO:0000250" key="1"/>
<evidence type="ECO:0000305" key="2"/>
<sequence length="619" mass="67888">MKKNRAFNQVKKTKFDGRIKTSAKHQLRNVKTGVKDGVFIYKGPLTVSEFASKTNIAVANIIKHFFLNGLALTVNSVLTNEQLADACVNFGFDFKMETEVTHENIVANIQFEDSDDLLQPRPPIVTIMGHVDHGKTSLLDTIRKTNVTAKEFGGITQKIGAYQVKNHQNKTITFIDTPGHEAFTLMRARGAKVTDIVVLVVAADDGIKKQTEEAISHAKSANTPIIVFINKMDKPTANPDLVIQQLNKFDLVPEAWGGKTIFVMGSALTGQGINELLDNILLLGEVEGYQANYNAHSSGYAIEVQTSKGLGPIANVIVKRGTLKLGDIVVLGPAYGRVRTMHDENGNSLKQATPSKPVQISGFDIMPVAGEKFIVFDDEKDAKLIANKFKEQQKQKANNLTVNQTLKEQIKNKEIKILNLIFKADSDGSLQAIKQAVENINVAKISLSIIHAAVGQISESDIMLAKASGALLFSLNLGLSQTVKNIASLQGVKLEVHYHIPKLAEEIENILKGQLDPVYEEIEIGKAEVLQLWFHSKIGNIAGTIVKSGKIKRGNLCKLFRDKEIIFEGRIDSLKNEKTPVNLIETGKNCGIVINGCNDIKIGDIIVAYEKQIVKDGKL</sequence>
<reference key="1">
    <citation type="journal article" date="1995" name="Science">
        <title>The minimal gene complement of Mycoplasma genitalium.</title>
        <authorList>
            <person name="Fraser C.M."/>
            <person name="Gocayne J.D."/>
            <person name="White O."/>
            <person name="Adams M.D."/>
            <person name="Clayton R.A."/>
            <person name="Fleischmann R.D."/>
            <person name="Bult C.J."/>
            <person name="Kerlavage A.R."/>
            <person name="Sutton G.G."/>
            <person name="Kelley J.M."/>
            <person name="Fritchman J.L."/>
            <person name="Weidman J.F."/>
            <person name="Small K.V."/>
            <person name="Sandusky M."/>
            <person name="Fuhrmann J.L."/>
            <person name="Nguyen D.T."/>
            <person name="Utterback T.R."/>
            <person name="Saudek D.M."/>
            <person name="Phillips C.A."/>
            <person name="Merrick J.M."/>
            <person name="Tomb J.-F."/>
            <person name="Dougherty B.A."/>
            <person name="Bott K.F."/>
            <person name="Hu P.-C."/>
            <person name="Lucier T.S."/>
            <person name="Peterson S.N."/>
            <person name="Smith H.O."/>
            <person name="Hutchison C.A. III"/>
            <person name="Venter J.C."/>
        </authorList>
    </citation>
    <scope>NUCLEOTIDE SEQUENCE [LARGE SCALE GENOMIC DNA]</scope>
    <source>
        <strain>ATCC 33530 / DSM 19775 / NCTC 10195 / G37</strain>
    </source>
</reference>
<reference key="2">
    <citation type="journal article" date="1993" name="J. Bacteriol.">
        <title>A survey of the Mycoplasma genitalium genome by using random sequencing.</title>
        <authorList>
            <person name="Peterson S.N."/>
            <person name="Hu P.-C."/>
            <person name="Bott K.F."/>
            <person name="Hutchison C.A. III"/>
        </authorList>
    </citation>
    <scope>NUCLEOTIDE SEQUENCE [GENOMIC DNA] OF 89-131</scope>
    <source>
        <strain>ATCC 33530 / DSM 19775 / NCTC 10195 / G37</strain>
    </source>
</reference>
<feature type="chain" id="PRO_0000137221" description="Translation initiation factor IF-2">
    <location>
        <begin position="1"/>
        <end position="619"/>
    </location>
</feature>
<feature type="domain" description="tr-type G">
    <location>
        <begin position="120"/>
        <end position="289"/>
    </location>
</feature>
<feature type="region of interest" description="G1" evidence="1">
    <location>
        <begin position="129"/>
        <end position="136"/>
    </location>
</feature>
<feature type="region of interest" description="G2" evidence="1">
    <location>
        <begin position="154"/>
        <end position="158"/>
    </location>
</feature>
<feature type="region of interest" description="G3" evidence="1">
    <location>
        <begin position="176"/>
        <end position="179"/>
    </location>
</feature>
<feature type="region of interest" description="G4" evidence="1">
    <location>
        <begin position="230"/>
        <end position="233"/>
    </location>
</feature>
<feature type="region of interest" description="G5" evidence="1">
    <location>
        <begin position="266"/>
        <end position="268"/>
    </location>
</feature>
<feature type="binding site" evidence="1">
    <location>
        <begin position="129"/>
        <end position="136"/>
    </location>
    <ligand>
        <name>GTP</name>
        <dbReference type="ChEBI" id="CHEBI:37565"/>
    </ligand>
</feature>
<feature type="binding site" evidence="1">
    <location>
        <begin position="176"/>
        <end position="180"/>
    </location>
    <ligand>
        <name>GTP</name>
        <dbReference type="ChEBI" id="CHEBI:37565"/>
    </ligand>
</feature>
<feature type="binding site" evidence="1">
    <location>
        <begin position="230"/>
        <end position="233"/>
    </location>
    <ligand>
        <name>GTP</name>
        <dbReference type="ChEBI" id="CHEBI:37565"/>
    </ligand>
</feature>
<organism>
    <name type="scientific">Mycoplasma genitalium (strain ATCC 33530 / DSM 19775 / NCTC 10195 / G37)</name>
    <name type="common">Mycoplasmoides genitalium</name>
    <dbReference type="NCBI Taxonomy" id="243273"/>
    <lineage>
        <taxon>Bacteria</taxon>
        <taxon>Bacillati</taxon>
        <taxon>Mycoplasmatota</taxon>
        <taxon>Mycoplasmoidales</taxon>
        <taxon>Mycoplasmoidaceae</taxon>
        <taxon>Mycoplasmoides</taxon>
    </lineage>
</organism>
<proteinExistence type="inferred from homology"/>
<gene>
    <name type="primary">infB</name>
    <name type="ordered locus">MG142</name>
</gene>
<accession>P47388</accession>